<accession>Q6UDG4</accession>
<evidence type="ECO:0000255" key="1"/>
<evidence type="ECO:0000256" key="2">
    <source>
        <dbReference type="SAM" id="MobiDB-lite"/>
    </source>
</evidence>
<evidence type="ECO:0000305" key="3"/>
<protein>
    <recommendedName>
        <fullName>Uncharacterized protein UL-1</fullName>
    </recommendedName>
</protein>
<gene>
    <name type="primary">UL-1</name>
</gene>
<keyword id="KW-1043">Host membrane</keyword>
<keyword id="KW-0472">Membrane</keyword>
<keyword id="KW-1185">Reference proteome</keyword>
<keyword id="KW-0812">Transmembrane</keyword>
<keyword id="KW-1133">Transmembrane helix</keyword>
<sequence>MEVARDGIMHPVDDFLMVVKAAMLEMMMMGKMAERYYYYVQLAFKMLVGVLKNLPVVYSYRYDAREYITETSNAVLGDDEVFEFGSSGEMVNSFLAFLRRALDWCAKFDEPPDMGGHGIEFMYPTRPTRIQRSTMGYFVRPKVPAAIVADAAVAAANLHFSNQVGEVSVRVPSRDLQPGEAGPSSSGGGRRDPAQANRGPVARVTPFVVERRYEEGEPGENGDESDEDGGRMDGDEDAAQSEQNNDDGMDYESDVTDHSSAWGEEPDRRHDAEAGERGSERSGSNSEADERRRSYENDDIQVDVTSVSEDSESDGDFEERRDARIRGATADAPRPRRGEREEDDERGEGAANDGGRRPARRDSPDSVIVIDDTSSSEDETFPPVLWLQRRDDPRTLLSRTRRAASRTRTIGGTRPRSRSPHRRGEGRDLPEDN</sequence>
<name>UL01_PSHV1</name>
<dbReference type="EMBL" id="AY372243">
    <property type="protein sequence ID" value="AAQ73746.1"/>
    <property type="molecule type" value="Genomic_DNA"/>
</dbReference>
<dbReference type="Proteomes" id="UP000006840">
    <property type="component" value="Segment"/>
</dbReference>
<dbReference type="GO" id="GO:0033644">
    <property type="term" value="C:host cell membrane"/>
    <property type="evidence" value="ECO:0007669"/>
    <property type="project" value="UniProtKB-SubCell"/>
</dbReference>
<dbReference type="GO" id="GO:0016020">
    <property type="term" value="C:membrane"/>
    <property type="evidence" value="ECO:0007669"/>
    <property type="project" value="UniProtKB-KW"/>
</dbReference>
<organism>
    <name type="scientific">Psittacid herpesvirus 1 (isolate Amazon parrot/-/97-0001/1997)</name>
    <name type="common">PsHV-1</name>
    <name type="synonym">Pacheco's disease virus</name>
    <dbReference type="NCBI Taxonomy" id="670426"/>
    <lineage>
        <taxon>Viruses</taxon>
        <taxon>Duplodnaviria</taxon>
        <taxon>Heunggongvirae</taxon>
        <taxon>Peploviricota</taxon>
        <taxon>Herviviricetes</taxon>
        <taxon>Herpesvirales</taxon>
        <taxon>Orthoherpesviridae</taxon>
        <taxon>Alphaherpesvirinae</taxon>
        <taxon>Iltovirus</taxon>
        <taxon>Iltovirus psittacidalpha1</taxon>
        <taxon>Psittacid alphaherpesvirus 1</taxon>
    </lineage>
</organism>
<reference key="1">
    <citation type="journal article" date="2006" name="J. Virol.">
        <title>Psittacid herpesvirus 1 and infectious laryngotracheitis virus: Comparative genome sequence analysis of two avian alphaherpesviruses.</title>
        <authorList>
            <person name="Thureen D.R."/>
            <person name="Keeler C.L. Jr."/>
        </authorList>
    </citation>
    <scope>NUCLEOTIDE SEQUENCE [LARGE SCALE GENOMIC DNA]</scope>
</reference>
<proteinExistence type="predicted"/>
<comment type="subcellular location">
    <subcellularLocation>
        <location evidence="3">Host membrane</location>
        <topology evidence="3">Single-pass membrane protein</topology>
    </subcellularLocation>
</comment>
<feature type="chain" id="PRO_0000406859" description="Uncharacterized protein UL-1">
    <location>
        <begin position="1"/>
        <end position="433"/>
    </location>
</feature>
<feature type="transmembrane region" description="Helical" evidence="1">
    <location>
        <begin position="36"/>
        <end position="58"/>
    </location>
</feature>
<feature type="region of interest" description="Disordered" evidence="2">
    <location>
        <begin position="169"/>
        <end position="433"/>
    </location>
</feature>
<feature type="compositionally biased region" description="Acidic residues" evidence="2">
    <location>
        <begin position="216"/>
        <end position="227"/>
    </location>
</feature>
<feature type="compositionally biased region" description="Acidic residues" evidence="2">
    <location>
        <begin position="234"/>
        <end position="254"/>
    </location>
</feature>
<feature type="compositionally biased region" description="Basic and acidic residues" evidence="2">
    <location>
        <begin position="265"/>
        <end position="280"/>
    </location>
</feature>
<feature type="compositionally biased region" description="Basic and acidic residues" evidence="2">
    <location>
        <begin position="354"/>
        <end position="364"/>
    </location>
</feature>
<feature type="compositionally biased region" description="Basic and acidic residues" evidence="2">
    <location>
        <begin position="422"/>
        <end position="433"/>
    </location>
</feature>
<organismHost>
    <name type="scientific">Amazona oratrix</name>
    <name type="common">yellow-headed parrot</name>
    <dbReference type="NCBI Taxonomy" id="152276"/>
</organismHost>